<reference key="1">
    <citation type="journal article" date="2005" name="Science">
        <title>Genome of the host-cell transforming parasite Theileria annulata compared with T. parva.</title>
        <authorList>
            <person name="Pain A."/>
            <person name="Renauld H."/>
            <person name="Berriman M."/>
            <person name="Murphy L."/>
            <person name="Yeats C.A."/>
            <person name="Weir W."/>
            <person name="Kerhornou A."/>
            <person name="Aslett M."/>
            <person name="Bishop R."/>
            <person name="Bouchier C."/>
            <person name="Cochet M."/>
            <person name="Coulson R.M.R."/>
            <person name="Cronin A."/>
            <person name="de Villiers E.P."/>
            <person name="Fraser A."/>
            <person name="Fosker N."/>
            <person name="Gardner M."/>
            <person name="Goble A."/>
            <person name="Griffiths-Jones S."/>
            <person name="Harris D.E."/>
            <person name="Katzer F."/>
            <person name="Larke N."/>
            <person name="Lord A."/>
            <person name="Maser P."/>
            <person name="McKellar S."/>
            <person name="Mooney P."/>
            <person name="Morton F."/>
            <person name="Nene V."/>
            <person name="O'Neil S."/>
            <person name="Price C."/>
            <person name="Quail M.A."/>
            <person name="Rabbinowitsch E."/>
            <person name="Rawlings N.D."/>
            <person name="Rutter S."/>
            <person name="Saunders D."/>
            <person name="Seeger K."/>
            <person name="Shah T."/>
            <person name="Squares R."/>
            <person name="Squares S."/>
            <person name="Tivey A."/>
            <person name="Walker A.R."/>
            <person name="Woodward J."/>
            <person name="Dobbelaere D.A.E."/>
            <person name="Langsley G."/>
            <person name="Rajandream M.A."/>
            <person name="McKeever D."/>
            <person name="Shiels B."/>
            <person name="Tait A."/>
            <person name="Barrell B.G."/>
            <person name="Hall N."/>
        </authorList>
    </citation>
    <scope>NUCLEOTIDE SEQUENCE [LARGE SCALE GENOMIC DNA]</scope>
    <source>
        <strain>Ankara</strain>
    </source>
</reference>
<comment type="function">
    <text evidence="1">Required for the assembly and/or stability of the 40S ribosomal subunit. Required for the processing of the 20S rRNA-precursor to mature 18S rRNA in a late step of the maturation of 40S ribosomal subunits.</text>
</comment>
<comment type="subunit">
    <text evidence="1">Component of the small ribosomal subunit. Mature ribosomes consist of a small (40S) and a large (60S) subunit. The 40S subunit contains about 33 different proteins and 1 molecule of RNA (18S). The 60S subunit contains about 49 different proteins and 3 molecules of RNA (25S, 5.8S and 5S). Interacts with ribosomal protein S21.</text>
</comment>
<comment type="subcellular location">
    <subcellularLocation>
        <location evidence="1">Cytoplasm</location>
    </subcellularLocation>
</comment>
<comment type="similarity">
    <text evidence="1">Belongs to the universal ribosomal protein uS2 family.</text>
</comment>
<proteinExistence type="inferred from homology"/>
<name>RSSA_THEAN</name>
<dbReference type="EMBL" id="CR940353">
    <property type="protein sequence ID" value="CAI76758.1"/>
    <property type="molecule type" value="Genomic_DNA"/>
</dbReference>
<dbReference type="RefSeq" id="XP_953383.1">
    <property type="nucleotide sequence ID" value="XM_948290.1"/>
</dbReference>
<dbReference type="SMR" id="Q4U8U5"/>
<dbReference type="STRING" id="5874.Q4U8U5"/>
<dbReference type="GeneID" id="3862533"/>
<dbReference type="KEGG" id="tan:TA10185"/>
<dbReference type="VEuPathDB" id="PiroplasmaDB:TA10185"/>
<dbReference type="eggNOG" id="KOG0830">
    <property type="taxonomic scope" value="Eukaryota"/>
</dbReference>
<dbReference type="InParanoid" id="Q4U8U5"/>
<dbReference type="OMA" id="VKNFFEP"/>
<dbReference type="OrthoDB" id="414863at2759"/>
<dbReference type="Proteomes" id="UP000001950">
    <property type="component" value="Chromosome 4"/>
</dbReference>
<dbReference type="GO" id="GO:0022627">
    <property type="term" value="C:cytosolic small ribosomal subunit"/>
    <property type="evidence" value="ECO:0007669"/>
    <property type="project" value="UniProtKB-UniRule"/>
</dbReference>
<dbReference type="GO" id="GO:0003735">
    <property type="term" value="F:structural constituent of ribosome"/>
    <property type="evidence" value="ECO:0007669"/>
    <property type="project" value="UniProtKB-UniRule"/>
</dbReference>
<dbReference type="GO" id="GO:0000028">
    <property type="term" value="P:ribosomal small subunit assembly"/>
    <property type="evidence" value="ECO:0007669"/>
    <property type="project" value="UniProtKB-UniRule"/>
</dbReference>
<dbReference type="GO" id="GO:0006412">
    <property type="term" value="P:translation"/>
    <property type="evidence" value="ECO:0007669"/>
    <property type="project" value="UniProtKB-UniRule"/>
</dbReference>
<dbReference type="CDD" id="cd01425">
    <property type="entry name" value="RPS2"/>
    <property type="match status" value="1"/>
</dbReference>
<dbReference type="FunFam" id="3.40.50.10490:FF:000012">
    <property type="entry name" value="40S ribosomal protein SA"/>
    <property type="match status" value="1"/>
</dbReference>
<dbReference type="Gene3D" id="3.40.50.10490">
    <property type="entry name" value="Glucose-6-phosphate isomerase like protein, domain 1"/>
    <property type="match status" value="1"/>
</dbReference>
<dbReference type="HAMAP" id="MF_03015">
    <property type="entry name" value="Ribosomal_S2_euk"/>
    <property type="match status" value="1"/>
</dbReference>
<dbReference type="InterPro" id="IPR001865">
    <property type="entry name" value="Ribosomal_uS2"/>
</dbReference>
<dbReference type="InterPro" id="IPR018130">
    <property type="entry name" value="Ribosomal_uS2_CS"/>
</dbReference>
<dbReference type="InterPro" id="IPR027498">
    <property type="entry name" value="Ribosomal_uS2_euk"/>
</dbReference>
<dbReference type="InterPro" id="IPR005707">
    <property type="entry name" value="Ribosomal_uS2_euk/arc"/>
</dbReference>
<dbReference type="InterPro" id="IPR023591">
    <property type="entry name" value="Ribosomal_uS2_flav_dom_sf"/>
</dbReference>
<dbReference type="NCBIfam" id="TIGR01012">
    <property type="entry name" value="uS2_euk_arch"/>
    <property type="match status" value="1"/>
</dbReference>
<dbReference type="PANTHER" id="PTHR11489">
    <property type="entry name" value="40S RIBOSOMAL PROTEIN SA"/>
    <property type="match status" value="1"/>
</dbReference>
<dbReference type="Pfam" id="PF00318">
    <property type="entry name" value="Ribosomal_S2"/>
    <property type="match status" value="2"/>
</dbReference>
<dbReference type="PRINTS" id="PR00395">
    <property type="entry name" value="RIBOSOMALS2"/>
</dbReference>
<dbReference type="SUPFAM" id="SSF52313">
    <property type="entry name" value="Ribosomal protein S2"/>
    <property type="match status" value="1"/>
</dbReference>
<dbReference type="PROSITE" id="PS00962">
    <property type="entry name" value="RIBOSOMAL_S2_1"/>
    <property type="match status" value="1"/>
</dbReference>
<protein>
    <recommendedName>
        <fullName evidence="1">Small ribosomal subunit protein uS2</fullName>
    </recommendedName>
    <alternativeName>
        <fullName evidence="2">40S ribosomal protein SA</fullName>
    </alternativeName>
</protein>
<organism>
    <name type="scientific">Theileria annulata</name>
    <dbReference type="NCBI Taxonomy" id="5874"/>
    <lineage>
        <taxon>Eukaryota</taxon>
        <taxon>Sar</taxon>
        <taxon>Alveolata</taxon>
        <taxon>Apicomplexa</taxon>
        <taxon>Aconoidasida</taxon>
        <taxon>Piroplasmida</taxon>
        <taxon>Theileriidae</taxon>
        <taxon>Theileria</taxon>
    </lineage>
</organism>
<sequence>MAAPTSKLTPDEDSIRMMLTAKVHIGTKNVENKMRKYVYSRTQEGVHLINLAHTLEKLKVAARAIVTVSNPEEVVVVSARPYGSRAVLKFSHYVGSHPIAGRWIPGTLTNQITQKFIEPRLLVATDPRTDAQSLKESSYVSLPVIALCDTDSPLNYVDIAIPCNNKGKESIALMYWLLAREVLYLRDQLKRWMPWDVLVDTFFWRDPEQFEQKPEETVNTHEEDLMASRPNVPLHPLPDWSTVDPSHANSSDWKVMAAGHEEWGSFVDTRAQWQ</sequence>
<feature type="chain" id="PRO_0000371611" description="Small ribosomal subunit protein uS2">
    <location>
        <begin position="1"/>
        <end position="274"/>
    </location>
</feature>
<evidence type="ECO:0000255" key="1">
    <source>
        <dbReference type="HAMAP-Rule" id="MF_03015"/>
    </source>
</evidence>
<evidence type="ECO:0000305" key="2"/>
<gene>
    <name type="ORF">TA10185</name>
</gene>
<accession>Q4U8U5</accession>
<keyword id="KW-0963">Cytoplasm</keyword>
<keyword id="KW-1185">Reference proteome</keyword>
<keyword id="KW-0687">Ribonucleoprotein</keyword>
<keyword id="KW-0689">Ribosomal protein</keyword>